<organism>
    <name type="scientific">Salmonella dublin (strain CT_02021853)</name>
    <dbReference type="NCBI Taxonomy" id="439851"/>
    <lineage>
        <taxon>Bacteria</taxon>
        <taxon>Pseudomonadati</taxon>
        <taxon>Pseudomonadota</taxon>
        <taxon>Gammaproteobacteria</taxon>
        <taxon>Enterobacterales</taxon>
        <taxon>Enterobacteriaceae</taxon>
        <taxon>Salmonella</taxon>
    </lineage>
</organism>
<accession>B5FLH2</accession>
<proteinExistence type="inferred from homology"/>
<feature type="chain" id="PRO_0000383439" description="L-lactate dehydrogenase">
    <location>
        <begin position="1"/>
        <end position="396"/>
    </location>
</feature>
<feature type="domain" description="FMN hydroxy acid dehydrogenase" evidence="1">
    <location>
        <begin position="1"/>
        <end position="380"/>
    </location>
</feature>
<feature type="active site" description="Proton acceptor" evidence="1">
    <location>
        <position position="275"/>
    </location>
</feature>
<feature type="binding site" evidence="1">
    <location>
        <position position="24"/>
    </location>
    <ligand>
        <name>substrate</name>
    </ligand>
</feature>
<feature type="binding site" evidence="1">
    <location>
        <position position="106"/>
    </location>
    <ligand>
        <name>FMN</name>
        <dbReference type="ChEBI" id="CHEBI:58210"/>
    </ligand>
</feature>
<feature type="binding site" evidence="1">
    <location>
        <position position="127"/>
    </location>
    <ligand>
        <name>FMN</name>
        <dbReference type="ChEBI" id="CHEBI:58210"/>
    </ligand>
</feature>
<feature type="binding site" evidence="1">
    <location>
        <position position="129"/>
    </location>
    <ligand>
        <name>substrate</name>
    </ligand>
</feature>
<feature type="binding site" evidence="1">
    <location>
        <position position="155"/>
    </location>
    <ligand>
        <name>FMN</name>
        <dbReference type="ChEBI" id="CHEBI:58210"/>
    </ligand>
</feature>
<feature type="binding site" evidence="1">
    <location>
        <position position="164"/>
    </location>
    <ligand>
        <name>substrate</name>
    </ligand>
</feature>
<feature type="binding site" evidence="1">
    <location>
        <position position="251"/>
    </location>
    <ligand>
        <name>FMN</name>
        <dbReference type="ChEBI" id="CHEBI:58210"/>
    </ligand>
</feature>
<feature type="binding site" evidence="1">
    <location>
        <position position="278"/>
    </location>
    <ligand>
        <name>substrate</name>
    </ligand>
</feature>
<feature type="binding site" evidence="1">
    <location>
        <begin position="306"/>
        <end position="330"/>
    </location>
    <ligand>
        <name>FMN</name>
        <dbReference type="ChEBI" id="CHEBI:58210"/>
    </ligand>
</feature>
<reference key="1">
    <citation type="journal article" date="2011" name="J. Bacteriol.">
        <title>Comparative genomics of 28 Salmonella enterica isolates: evidence for CRISPR-mediated adaptive sublineage evolution.</title>
        <authorList>
            <person name="Fricke W.F."/>
            <person name="Mammel M.K."/>
            <person name="McDermott P.F."/>
            <person name="Tartera C."/>
            <person name="White D.G."/>
            <person name="Leclerc J.E."/>
            <person name="Ravel J."/>
            <person name="Cebula T.A."/>
        </authorList>
    </citation>
    <scope>NUCLEOTIDE SEQUENCE [LARGE SCALE GENOMIC DNA]</scope>
    <source>
        <strain>CT_02021853</strain>
    </source>
</reference>
<gene>
    <name evidence="1" type="primary">lldD</name>
    <name type="ordered locus">SeD_A4080</name>
</gene>
<protein>
    <recommendedName>
        <fullName evidence="1">L-lactate dehydrogenase</fullName>
        <ecNumber evidence="1">1.1.-.-</ecNumber>
    </recommendedName>
</protein>
<sequence>MIISAASDYRAAAQRTLPPFLFHYIDGGAYAEYTLRRNVEDLSQVALRQRVLKNMSDLSLETTLFNETLSMPVALAPVGLCGMYARRGEVQAAAAADAKGIPFTLSTVSVCPIEEVAPTIKRPMWFQLYVLRDRGFMRNALERAKAAGCSTLVFTVDMPTPGARYRDAHSGMSGPNAAMRRYWQAVMHPKWAWDVGLNGRPHDLGNISAYLGKPTGLEDYIGWLANNFDPSISWKDLEWIREFWDGPMVIKGILDPEDARDAVRFGADGIVVSNHGGRQLDGVLSSARALPAIADAVKGDIAILADSGIRNGLDVVRMIALGADTVLLGRAYLYALATAGKAGVANLLDLIEKEMKVAMTLTGAKSISEISGDSLVQELGKSLPAALAPMSKGDAA</sequence>
<evidence type="ECO:0000255" key="1">
    <source>
        <dbReference type="HAMAP-Rule" id="MF_01559"/>
    </source>
</evidence>
<name>LLDD_SALDC</name>
<dbReference type="EC" id="1.1.-.-" evidence="1"/>
<dbReference type="EMBL" id="CP001144">
    <property type="protein sequence ID" value="ACH75561.1"/>
    <property type="molecule type" value="Genomic_DNA"/>
</dbReference>
<dbReference type="RefSeq" id="WP_000586988.1">
    <property type="nucleotide sequence ID" value="NC_011205.1"/>
</dbReference>
<dbReference type="SMR" id="B5FLH2"/>
<dbReference type="KEGG" id="sed:SeD_A4080"/>
<dbReference type="HOGENOM" id="CLU_020639_0_0_6"/>
<dbReference type="Proteomes" id="UP000008322">
    <property type="component" value="Chromosome"/>
</dbReference>
<dbReference type="GO" id="GO:0005886">
    <property type="term" value="C:plasma membrane"/>
    <property type="evidence" value="ECO:0007669"/>
    <property type="project" value="UniProtKB-SubCell"/>
</dbReference>
<dbReference type="GO" id="GO:0010181">
    <property type="term" value="F:FMN binding"/>
    <property type="evidence" value="ECO:0007669"/>
    <property type="project" value="InterPro"/>
</dbReference>
<dbReference type="GO" id="GO:0004459">
    <property type="term" value="F:L-lactate dehydrogenase activity"/>
    <property type="evidence" value="ECO:0007669"/>
    <property type="project" value="UniProtKB-UniRule"/>
</dbReference>
<dbReference type="GO" id="GO:0009060">
    <property type="term" value="P:aerobic respiration"/>
    <property type="evidence" value="ECO:0007669"/>
    <property type="project" value="TreeGrafter"/>
</dbReference>
<dbReference type="GO" id="GO:0006089">
    <property type="term" value="P:lactate metabolic process"/>
    <property type="evidence" value="ECO:0007669"/>
    <property type="project" value="UniProtKB-UniRule"/>
</dbReference>
<dbReference type="CDD" id="cd02809">
    <property type="entry name" value="alpha_hydroxyacid_oxid_FMN"/>
    <property type="match status" value="1"/>
</dbReference>
<dbReference type="FunFam" id="3.20.20.70:FF:000029">
    <property type="entry name" value="L-lactate dehydrogenase"/>
    <property type="match status" value="1"/>
</dbReference>
<dbReference type="Gene3D" id="3.20.20.70">
    <property type="entry name" value="Aldolase class I"/>
    <property type="match status" value="1"/>
</dbReference>
<dbReference type="HAMAP" id="MF_01559">
    <property type="entry name" value="L_lact_dehydr"/>
    <property type="match status" value="1"/>
</dbReference>
<dbReference type="InterPro" id="IPR013785">
    <property type="entry name" value="Aldolase_TIM"/>
</dbReference>
<dbReference type="InterPro" id="IPR012133">
    <property type="entry name" value="Alpha-hydoxy_acid_DH_FMN"/>
</dbReference>
<dbReference type="InterPro" id="IPR000262">
    <property type="entry name" value="FMN-dep_DH"/>
</dbReference>
<dbReference type="InterPro" id="IPR037396">
    <property type="entry name" value="FMN_HAD"/>
</dbReference>
<dbReference type="InterPro" id="IPR008259">
    <property type="entry name" value="FMN_hydac_DH_AS"/>
</dbReference>
<dbReference type="InterPro" id="IPR020920">
    <property type="entry name" value="LldD"/>
</dbReference>
<dbReference type="NCBIfam" id="NF033901">
    <property type="entry name" value="L_lactate_LldD"/>
    <property type="match status" value="1"/>
</dbReference>
<dbReference type="NCBIfam" id="NF008398">
    <property type="entry name" value="PRK11197.1"/>
    <property type="match status" value="1"/>
</dbReference>
<dbReference type="PANTHER" id="PTHR10578:SF85">
    <property type="entry name" value="L-LACTATE DEHYDROGENASE"/>
    <property type="match status" value="1"/>
</dbReference>
<dbReference type="PANTHER" id="PTHR10578">
    <property type="entry name" value="S -2-HYDROXY-ACID OXIDASE-RELATED"/>
    <property type="match status" value="1"/>
</dbReference>
<dbReference type="Pfam" id="PF01070">
    <property type="entry name" value="FMN_dh"/>
    <property type="match status" value="1"/>
</dbReference>
<dbReference type="PIRSF" id="PIRSF000138">
    <property type="entry name" value="Al-hdrx_acd_dh"/>
    <property type="match status" value="1"/>
</dbReference>
<dbReference type="SUPFAM" id="SSF51395">
    <property type="entry name" value="FMN-linked oxidoreductases"/>
    <property type="match status" value="1"/>
</dbReference>
<dbReference type="PROSITE" id="PS00557">
    <property type="entry name" value="FMN_HYDROXY_ACID_DH_1"/>
    <property type="match status" value="1"/>
</dbReference>
<dbReference type="PROSITE" id="PS51349">
    <property type="entry name" value="FMN_HYDROXY_ACID_DH_2"/>
    <property type="match status" value="1"/>
</dbReference>
<comment type="function">
    <text evidence="1">Catalyzes the conversion of L-lactate to pyruvate. Is coupled to the respiratory chain.</text>
</comment>
<comment type="catalytic activity">
    <reaction evidence="1">
        <text>(S)-lactate + A = pyruvate + AH2</text>
        <dbReference type="Rhea" id="RHEA:45816"/>
        <dbReference type="ChEBI" id="CHEBI:13193"/>
        <dbReference type="ChEBI" id="CHEBI:15361"/>
        <dbReference type="ChEBI" id="CHEBI:16651"/>
        <dbReference type="ChEBI" id="CHEBI:17499"/>
    </reaction>
</comment>
<comment type="cofactor">
    <cofactor evidence="1">
        <name>FMN</name>
        <dbReference type="ChEBI" id="CHEBI:58210"/>
    </cofactor>
</comment>
<comment type="subcellular location">
    <subcellularLocation>
        <location evidence="1">Cell inner membrane</location>
        <topology evidence="1">Peripheral membrane protein</topology>
    </subcellularLocation>
</comment>
<comment type="similarity">
    <text evidence="1">Belongs to the FMN-dependent alpha-hydroxy acid dehydrogenase family.</text>
</comment>
<keyword id="KW-0997">Cell inner membrane</keyword>
<keyword id="KW-1003">Cell membrane</keyword>
<keyword id="KW-0285">Flavoprotein</keyword>
<keyword id="KW-0288">FMN</keyword>
<keyword id="KW-0472">Membrane</keyword>
<keyword id="KW-0560">Oxidoreductase</keyword>